<organism>
    <name type="scientific">Danio rerio</name>
    <name type="common">Zebrafish</name>
    <name type="synonym">Brachydanio rerio</name>
    <dbReference type="NCBI Taxonomy" id="7955"/>
    <lineage>
        <taxon>Eukaryota</taxon>
        <taxon>Metazoa</taxon>
        <taxon>Chordata</taxon>
        <taxon>Craniata</taxon>
        <taxon>Vertebrata</taxon>
        <taxon>Euteleostomi</taxon>
        <taxon>Actinopterygii</taxon>
        <taxon>Neopterygii</taxon>
        <taxon>Teleostei</taxon>
        <taxon>Ostariophysi</taxon>
        <taxon>Cypriniformes</taxon>
        <taxon>Danionidae</taxon>
        <taxon>Danioninae</taxon>
        <taxon>Danio</taxon>
    </lineage>
</organism>
<evidence type="ECO:0000250" key="1"/>
<evidence type="ECO:0000250" key="2">
    <source>
        <dbReference type="UniProtKB" id="P05783"/>
    </source>
</evidence>
<evidence type="ECO:0000255" key="3"/>
<evidence type="ECO:0000255" key="4">
    <source>
        <dbReference type="PROSITE-ProRule" id="PRU01188"/>
    </source>
</evidence>
<evidence type="ECO:0000269" key="5">
    <source>
    </source>
</evidence>
<evidence type="ECO:0000269" key="6">
    <source>
    </source>
</evidence>
<evidence type="ECO:0000269" key="7">
    <source>
    </source>
</evidence>
<evidence type="ECO:0000305" key="8"/>
<evidence type="ECO:0000312" key="9">
    <source>
        <dbReference type="EMBL" id="AAH45869.1"/>
    </source>
</evidence>
<evidence type="ECO:0000312" key="10">
    <source>
        <dbReference type="EMBL" id="AAQ10781.1"/>
    </source>
</evidence>
<evidence type="ECO:0000312" key="11">
    <source>
        <dbReference type="EMBL" id="CAD38146.1"/>
    </source>
</evidence>
<evidence type="ECO:0000312" key="12">
    <source>
        <dbReference type="ZFIN" id="ZDB-GENE-030411-6"/>
    </source>
</evidence>
<feature type="initiator methionine" description="Removed" evidence="2">
    <location>
        <position position="1"/>
    </location>
</feature>
<feature type="chain" id="PRO_0000289072" description="Keratin, type I cytoskeletal 18" evidence="2">
    <location>
        <begin position="2"/>
        <end position="431"/>
    </location>
</feature>
<feature type="domain" description="IF rod" evidence="4">
    <location>
        <begin position="84"/>
        <end position="395"/>
    </location>
</feature>
<feature type="region of interest" description="Head" evidence="3">
    <location>
        <begin position="2"/>
        <end position="83"/>
    </location>
</feature>
<feature type="region of interest" description="Coil 1A" evidence="3">
    <location>
        <begin position="84"/>
        <end position="119"/>
    </location>
</feature>
<feature type="region of interest" description="Linker 1" evidence="3">
    <location>
        <begin position="120"/>
        <end position="136"/>
    </location>
</feature>
<feature type="region of interest" description="Coil 1B" evidence="3">
    <location>
        <begin position="137"/>
        <end position="228"/>
    </location>
</feature>
<feature type="region of interest" description="Linker 12" evidence="3">
    <location>
        <begin position="229"/>
        <end position="252"/>
    </location>
</feature>
<feature type="region of interest" description="Coil 2" evidence="3">
    <location>
        <begin position="253"/>
        <end position="390"/>
    </location>
</feature>
<feature type="region of interest" description="Tail" evidence="3">
    <location>
        <begin position="391"/>
        <end position="431"/>
    </location>
</feature>
<feature type="site" description="Cleavage; by caspases" evidence="1">
    <location>
        <begin position="242"/>
        <end position="243"/>
    </location>
</feature>
<feature type="site" description="Stutter" evidence="3">
    <location>
        <position position="335"/>
    </location>
</feature>
<feature type="modified residue" description="Phosphoserine" evidence="6">
    <location>
        <position position="12"/>
    </location>
</feature>
<feature type="modified residue" description="Phosphothreonine" evidence="6">
    <location>
        <position position="13"/>
    </location>
</feature>
<feature type="modified residue" description="Phosphoserine" evidence="6">
    <location>
        <position position="22"/>
    </location>
</feature>
<feature type="modified residue" description="Phosphoserine" evidence="6">
    <location>
        <position position="36"/>
    </location>
</feature>
<feature type="sequence conflict" description="In Ref. 1; AAH45869." evidence="8" ref="1">
    <original>V</original>
    <variation>A</variation>
    <location>
        <position position="21"/>
    </location>
</feature>
<feature type="sequence conflict" description="In Ref. 3; CAD38146." evidence="8" ref="3">
    <original>S</original>
    <variation>T</variation>
    <location>
        <position position="421"/>
    </location>
</feature>
<name>K1C18_DANRE</name>
<comment type="function">
    <text evidence="1">When phosphorylated, plays a role in filament reorganization.</text>
</comment>
<comment type="subunit">
    <text evidence="1">Heterotetramer of two type I and two type II keratins. Keratin-18 associates with keratin-8 (By similarity).</text>
</comment>
<comment type="tissue specificity">
    <text evidence="5 7">Expressed in simple epithelia such as intestinal mucosa, bile duct, hepatocytes, renal tubules, endothelia, ocular lens epithelium, and in a variety of mesenchymally-derived cells such as blood vessel endothelia, pillar gill cells, optic nerve glial cells, fibroblasts, interstitial cells, chondrocytes and ovarian theca cells. Also expressed in epidermis, pharyngeal mucosa, mucosa of anterior esophagus, gill mucosa and cornea.</text>
</comment>
<comment type="PTM">
    <text evidence="1">Proteolytically cleaved by caspases during epithelial cell apoptosis.</text>
</comment>
<comment type="miscellaneous">
    <text evidence="8">There are two types of cytoskeletal and microfibrillar keratin: I (acidic; 40-55 kDa) and II (neutral to basic; 56-70 kDa).</text>
</comment>
<comment type="similarity">
    <text evidence="4">Belongs to the intermediate filament family.</text>
</comment>
<gene>
    <name evidence="9 12" type="primary">krt18</name>
    <name evidence="10" type="synonym">dapk1</name>
</gene>
<proteinExistence type="evidence at protein level"/>
<sequence>MSLRTSYSVRSSTSQVPVSQVSIKRTTNVPTYRAASIYGGAGGQGTRISSASYSGVRSGLGVPSMSSSIQVSASGSTGEIMGNEKMAMQNLNDRLASYLEKVRILEQANSKLELKIREALEKRGPDVHDYSRFQPIVDELRKKIFDATTNNARLVLQIDNARLAADDFRVKYESELSIRQGVEADITGLRKVIDDTNLNRMNLESEIEALKEELIFLKKNHDNEVMELRNQISQSGVQVDVDAPKGQDLSQIMEEIRAKYEKMALKNQEELKAWHESQITEVQVQVTQNTEALQGARSEVNELRRQIQTLEIELESQKNLKGSLEGTLRDTEMRYNMEIENLNTIILQLEAELTQLRGNIQHQTQEYEALLNIKMKLEAEIATYRRLLDGGDFKLQDALEEQKKVKVMTVTQTLVDGKVVSSSTETKERKL</sequence>
<keyword id="KW-0175">Coiled coil</keyword>
<keyword id="KW-0403">Intermediate filament</keyword>
<keyword id="KW-0416">Keratin</keyword>
<keyword id="KW-0597">Phosphoprotein</keyword>
<keyword id="KW-1185">Reference proteome</keyword>
<accession>Q7ZTS4</accession>
<accession>Q6P042</accession>
<accession>Q7ZT44</accession>
<dbReference type="EMBL" id="AF537368">
    <property type="protein sequence ID" value="AAQ10781.1"/>
    <property type="molecule type" value="mRNA"/>
</dbReference>
<dbReference type="EMBL" id="BC045869">
    <property type="protein sequence ID" value="AAH45869.1"/>
    <property type="molecule type" value="mRNA"/>
</dbReference>
<dbReference type="EMBL" id="BC065848">
    <property type="protein sequence ID" value="AAH65848.1"/>
    <property type="molecule type" value="mRNA"/>
</dbReference>
<dbReference type="EMBL" id="BF157147">
    <property type="status" value="NOT_ANNOTATED_CDS"/>
    <property type="molecule type" value="mRNA"/>
</dbReference>
<dbReference type="EMBL" id="AJ493269">
    <property type="protein sequence ID" value="CAD38146.1"/>
    <property type="molecule type" value="mRNA"/>
</dbReference>
<dbReference type="RefSeq" id="NP_848524.1">
    <property type="nucleotide sequence ID" value="NM_178437.2"/>
</dbReference>
<dbReference type="SMR" id="Q7ZTS4"/>
<dbReference type="FunCoup" id="Q7ZTS4">
    <property type="interactions" value="635"/>
</dbReference>
<dbReference type="IntAct" id="Q7ZTS4">
    <property type="interactions" value="1"/>
</dbReference>
<dbReference type="MINT" id="Q7ZTS4"/>
<dbReference type="STRING" id="7955.ENSDARP00000110768"/>
<dbReference type="iPTMnet" id="Q7ZTS4"/>
<dbReference type="PaxDb" id="7955-ENSDARP00000110768"/>
<dbReference type="Ensembl" id="ENSDART00000127667">
    <property type="protein sequence ID" value="ENSDARP00000110768"/>
    <property type="gene ID" value="ENSDARG00000018404"/>
</dbReference>
<dbReference type="Ensembl" id="ENSDART00000183130">
    <property type="protein sequence ID" value="ENSDARP00000148009"/>
    <property type="gene ID" value="ENSDARG00000109528"/>
</dbReference>
<dbReference type="GeneID" id="352912"/>
<dbReference type="KEGG" id="dre:352912"/>
<dbReference type="AGR" id="ZFIN:ZDB-GENE-030411-6"/>
<dbReference type="CTD" id="352912"/>
<dbReference type="ZFIN" id="ZDB-GENE-030411-6">
    <property type="gene designation" value="krt18a.1"/>
</dbReference>
<dbReference type="eggNOG" id="ENOG502QUS8">
    <property type="taxonomic scope" value="Eukaryota"/>
</dbReference>
<dbReference type="HOGENOM" id="CLU_012560_8_1_1"/>
<dbReference type="InParanoid" id="Q7ZTS4"/>
<dbReference type="OMA" id="IHSTKIV"/>
<dbReference type="OrthoDB" id="2441647at2759"/>
<dbReference type="PhylomeDB" id="Q7ZTS4"/>
<dbReference type="PRO" id="PR:Q7ZTS4"/>
<dbReference type="Proteomes" id="UP000000437">
    <property type="component" value="Alternate scaffold 23"/>
</dbReference>
<dbReference type="Proteomes" id="UP000000437">
    <property type="component" value="Chromosome 23"/>
</dbReference>
<dbReference type="Bgee" id="ENSDARG00000018404">
    <property type="expression patterns" value="Expressed in gastrula and 20 other cell types or tissues"/>
</dbReference>
<dbReference type="GO" id="GO:0005856">
    <property type="term" value="C:cytoskeleton"/>
    <property type="evidence" value="ECO:0000318"/>
    <property type="project" value="GO_Central"/>
</dbReference>
<dbReference type="GO" id="GO:0045095">
    <property type="term" value="C:keratin filament"/>
    <property type="evidence" value="ECO:0000318"/>
    <property type="project" value="GO_Central"/>
</dbReference>
<dbReference type="GO" id="GO:0005198">
    <property type="term" value="F:structural molecule activity"/>
    <property type="evidence" value="ECO:0007669"/>
    <property type="project" value="InterPro"/>
</dbReference>
<dbReference type="GO" id="GO:0045104">
    <property type="term" value="P:intermediate filament cytoskeleton organization"/>
    <property type="evidence" value="ECO:0000318"/>
    <property type="project" value="GO_Central"/>
</dbReference>
<dbReference type="FunFam" id="1.20.5.1160:FF:000002">
    <property type="entry name" value="Type I keratin 10"/>
    <property type="match status" value="1"/>
</dbReference>
<dbReference type="FunFam" id="1.20.5.170:FF:000002">
    <property type="entry name" value="Type I keratin KA11"/>
    <property type="match status" value="1"/>
</dbReference>
<dbReference type="FunFam" id="1.20.5.500:FF:000001">
    <property type="entry name" value="Type II keratin 23"/>
    <property type="match status" value="1"/>
</dbReference>
<dbReference type="Gene3D" id="1.20.5.170">
    <property type="match status" value="1"/>
</dbReference>
<dbReference type="Gene3D" id="1.20.5.500">
    <property type="entry name" value="Single helix bin"/>
    <property type="match status" value="1"/>
</dbReference>
<dbReference type="Gene3D" id="1.20.5.1160">
    <property type="entry name" value="Vasodilator-stimulated phosphoprotein"/>
    <property type="match status" value="1"/>
</dbReference>
<dbReference type="InterPro" id="IPR018039">
    <property type="entry name" value="IF_conserved"/>
</dbReference>
<dbReference type="InterPro" id="IPR039008">
    <property type="entry name" value="IF_rod_dom"/>
</dbReference>
<dbReference type="InterPro" id="IPR002957">
    <property type="entry name" value="Keratin_I"/>
</dbReference>
<dbReference type="PANTHER" id="PTHR23239">
    <property type="entry name" value="INTERMEDIATE FILAMENT"/>
    <property type="match status" value="1"/>
</dbReference>
<dbReference type="PANTHER" id="PTHR23239:SF349">
    <property type="entry name" value="KERATIN, TYPE I CYTOSKELETAL 18"/>
    <property type="match status" value="1"/>
</dbReference>
<dbReference type="Pfam" id="PF00038">
    <property type="entry name" value="Filament"/>
    <property type="match status" value="1"/>
</dbReference>
<dbReference type="PRINTS" id="PR01248">
    <property type="entry name" value="TYPE1KERATIN"/>
</dbReference>
<dbReference type="SMART" id="SM01391">
    <property type="entry name" value="Filament"/>
    <property type="match status" value="1"/>
</dbReference>
<dbReference type="SUPFAM" id="SSF64593">
    <property type="entry name" value="Intermediate filament protein, coiled coil region"/>
    <property type="match status" value="2"/>
</dbReference>
<dbReference type="PROSITE" id="PS00226">
    <property type="entry name" value="IF_ROD_1"/>
    <property type="match status" value="1"/>
</dbReference>
<dbReference type="PROSITE" id="PS51842">
    <property type="entry name" value="IF_ROD_2"/>
    <property type="match status" value="1"/>
</dbReference>
<reference evidence="8 9" key="1">
    <citation type="submission" date="2004-01" db="EMBL/GenBank/DDBJ databases">
        <authorList>
            <consortium name="NIH - Zebrafish Gene Collection (ZGC) project"/>
        </authorList>
    </citation>
    <scope>NUCLEOTIDE SEQUENCE [LARGE SCALE MRNA]</scope>
    <source>
        <strain evidence="9">AB</strain>
    </source>
</reference>
<reference evidence="8 9" key="2">
    <citation type="submission" date="2000-11" db="EMBL/GenBank/DDBJ databases">
        <title>WashU Zebrafish EST Project 1998.</title>
        <authorList>
            <person name="Clark M."/>
            <person name="Johnson S.L."/>
            <person name="Lehrach H."/>
            <person name="Lee R."/>
            <person name="Li F."/>
            <person name="Marra M."/>
            <person name="Eddy S."/>
            <person name="Hillier L."/>
            <person name="Kucaba T."/>
            <person name="Martin J."/>
            <person name="Beck C."/>
            <person name="Wylie T."/>
            <person name="Underwood K."/>
            <person name="Steptoe M."/>
            <person name="Theising B."/>
            <person name="Allen M."/>
            <person name="Bowers Y."/>
            <person name="Person B."/>
            <person name="Swaller T."/>
            <person name="Gibbons M."/>
            <person name="Pape D."/>
            <person name="Harvey N."/>
            <person name="Schurk R."/>
            <person name="Ritter E."/>
            <person name="Kohn S."/>
            <person name="Shin T."/>
            <person name="Jackson Y."/>
            <person name="Cardenas M."/>
            <person name="McCann R."/>
            <person name="Waterston R."/>
            <person name="Wilson R."/>
        </authorList>
    </citation>
    <scope>NUCLEOTIDE SEQUENCE [MRNA] OF 1-182</scope>
    <source>
        <strain>AB</strain>
    </source>
</reference>
<reference evidence="8 11" key="3">
    <citation type="journal article" date="2003" name="Differentiation">
        <title>cDNA sequences of the authentic keratins 8 and 18 in zebrafish.</title>
        <authorList>
            <person name="Schaffeld M."/>
            <person name="Knappe M."/>
            <person name="Hunzinger C."/>
            <person name="Markl J."/>
        </authorList>
    </citation>
    <scope>NUCLEOTIDE SEQUENCE [MRNA] OF 73-431</scope>
    <scope>TISSUE SPECIFICITY</scope>
    <scope>IDENTIFICATION BY MASS SPECTROMETRY</scope>
</reference>
<reference evidence="8" key="4">
    <citation type="journal article" date="1998" name="Cell Tissue Res.">
        <title>Biochemical identification and tissue-specific expression patterns of keratins in the zebrafish Danio rerio.</title>
        <authorList>
            <person name="Conrad M."/>
            <person name="Lemb K."/>
            <person name="Schubert T."/>
            <person name="Markl J."/>
        </authorList>
    </citation>
    <scope>TISSUE SPECIFICITY</scope>
</reference>
<reference key="5">
    <citation type="journal article" date="2008" name="J. Proteome Res.">
        <title>Online automated in vivo zebrafish phosphoproteomics: from large-scale analysis down to a single embryo.</title>
        <authorList>
            <person name="Lemeer S."/>
            <person name="Pinkse M.W.H."/>
            <person name="Mohammed S."/>
            <person name="van Breukelen B."/>
            <person name="den Hertog J."/>
            <person name="Slijper M."/>
            <person name="Heck A.J.R."/>
        </authorList>
    </citation>
    <scope>PHOSPHORYLATION [LARGE SCALE ANALYSIS] AT SER-12; THR-13; SER-22 AND SER-36</scope>
    <scope>IDENTIFICATION BY MASS SPECTROMETRY</scope>
    <source>
        <tissue>Embryo</tissue>
    </source>
</reference>
<protein>
    <recommendedName>
        <fullName>Keratin, type I cytoskeletal 18</fullName>
    </recommendedName>
    <alternativeName>
        <fullName>Cytokeratin-18</fullName>
        <shortName>CK-18</shortName>
    </alternativeName>
    <alternativeName>
        <fullName>Dorsal aorta proneprin kinesin-1</fullName>
    </alternativeName>
    <alternativeName>
        <fullName>DreK18</fullName>
    </alternativeName>
    <alternativeName>
        <fullName>Keratin-18</fullName>
        <shortName>K18</shortName>
    </alternativeName>
</protein>